<name>NADA_BURM7</name>
<dbReference type="EC" id="2.5.1.72" evidence="1"/>
<dbReference type="EMBL" id="CP000548">
    <property type="protein sequence ID" value="ABO04228.1"/>
    <property type="molecule type" value="Genomic_DNA"/>
</dbReference>
<dbReference type="RefSeq" id="WP_004185886.1">
    <property type="nucleotide sequence ID" value="NZ_CP007802.1"/>
</dbReference>
<dbReference type="SMR" id="A3MN00"/>
<dbReference type="GeneID" id="93059425"/>
<dbReference type="KEGG" id="bmaz:BM44_1123"/>
<dbReference type="KEGG" id="bmn:BMA10247_2105"/>
<dbReference type="PATRIC" id="fig|320389.8.peg.1256"/>
<dbReference type="UniPathway" id="UPA00253">
    <property type="reaction ID" value="UER00327"/>
</dbReference>
<dbReference type="GO" id="GO:0005829">
    <property type="term" value="C:cytosol"/>
    <property type="evidence" value="ECO:0007669"/>
    <property type="project" value="TreeGrafter"/>
</dbReference>
<dbReference type="GO" id="GO:0051539">
    <property type="term" value="F:4 iron, 4 sulfur cluster binding"/>
    <property type="evidence" value="ECO:0007669"/>
    <property type="project" value="UniProtKB-KW"/>
</dbReference>
<dbReference type="GO" id="GO:0046872">
    <property type="term" value="F:metal ion binding"/>
    <property type="evidence" value="ECO:0007669"/>
    <property type="project" value="UniProtKB-KW"/>
</dbReference>
<dbReference type="GO" id="GO:0008987">
    <property type="term" value="F:quinolinate synthetase A activity"/>
    <property type="evidence" value="ECO:0007669"/>
    <property type="project" value="UniProtKB-UniRule"/>
</dbReference>
<dbReference type="GO" id="GO:0034628">
    <property type="term" value="P:'de novo' NAD biosynthetic process from L-aspartate"/>
    <property type="evidence" value="ECO:0007669"/>
    <property type="project" value="TreeGrafter"/>
</dbReference>
<dbReference type="FunFam" id="3.40.50.10800:FF:000001">
    <property type="entry name" value="Quinolinate synthase A"/>
    <property type="match status" value="1"/>
</dbReference>
<dbReference type="FunFam" id="3.40.50.10800:FF:000003">
    <property type="entry name" value="Quinolinate synthase A"/>
    <property type="match status" value="1"/>
</dbReference>
<dbReference type="Gene3D" id="3.40.50.10800">
    <property type="entry name" value="NadA-like"/>
    <property type="match status" value="3"/>
</dbReference>
<dbReference type="HAMAP" id="MF_00567">
    <property type="entry name" value="NadA_type1"/>
    <property type="match status" value="1"/>
</dbReference>
<dbReference type="InterPro" id="IPR003473">
    <property type="entry name" value="NadA"/>
</dbReference>
<dbReference type="InterPro" id="IPR036094">
    <property type="entry name" value="NadA_sf"/>
</dbReference>
<dbReference type="InterPro" id="IPR023513">
    <property type="entry name" value="Quinolinate_synth_A_type1"/>
</dbReference>
<dbReference type="NCBIfam" id="TIGR00550">
    <property type="entry name" value="nadA"/>
    <property type="match status" value="1"/>
</dbReference>
<dbReference type="NCBIfam" id="NF006877">
    <property type="entry name" value="PRK09375.1-1"/>
    <property type="match status" value="1"/>
</dbReference>
<dbReference type="NCBIfam" id="NF006878">
    <property type="entry name" value="PRK09375.1-2"/>
    <property type="match status" value="1"/>
</dbReference>
<dbReference type="PANTHER" id="PTHR30573:SF0">
    <property type="entry name" value="QUINOLINATE SYNTHASE, CHLOROPLASTIC"/>
    <property type="match status" value="1"/>
</dbReference>
<dbReference type="PANTHER" id="PTHR30573">
    <property type="entry name" value="QUINOLINATE SYNTHETASE A"/>
    <property type="match status" value="1"/>
</dbReference>
<dbReference type="Pfam" id="PF02445">
    <property type="entry name" value="NadA"/>
    <property type="match status" value="1"/>
</dbReference>
<dbReference type="SUPFAM" id="SSF142754">
    <property type="entry name" value="NadA-like"/>
    <property type="match status" value="1"/>
</dbReference>
<feature type="chain" id="PRO_1000024944" description="Quinolinate synthase">
    <location>
        <begin position="1"/>
        <end position="378"/>
    </location>
</feature>
<feature type="binding site" evidence="1">
    <location>
        <position position="59"/>
    </location>
    <ligand>
        <name>iminosuccinate</name>
        <dbReference type="ChEBI" id="CHEBI:77875"/>
    </ligand>
</feature>
<feature type="binding site" evidence="1">
    <location>
        <position position="80"/>
    </location>
    <ligand>
        <name>iminosuccinate</name>
        <dbReference type="ChEBI" id="CHEBI:77875"/>
    </ligand>
</feature>
<feature type="binding site" evidence="1">
    <location>
        <position position="125"/>
    </location>
    <ligand>
        <name>[4Fe-4S] cluster</name>
        <dbReference type="ChEBI" id="CHEBI:49883"/>
    </ligand>
</feature>
<feature type="binding site" evidence="1">
    <location>
        <begin position="151"/>
        <end position="153"/>
    </location>
    <ligand>
        <name>iminosuccinate</name>
        <dbReference type="ChEBI" id="CHEBI:77875"/>
    </ligand>
</feature>
<feature type="binding site" evidence="1">
    <location>
        <position position="168"/>
    </location>
    <ligand>
        <name>iminosuccinate</name>
        <dbReference type="ChEBI" id="CHEBI:77875"/>
    </ligand>
</feature>
<feature type="binding site" evidence="1">
    <location>
        <position position="212"/>
    </location>
    <ligand>
        <name>[4Fe-4S] cluster</name>
        <dbReference type="ChEBI" id="CHEBI:49883"/>
    </ligand>
</feature>
<feature type="binding site" evidence="1">
    <location>
        <begin position="238"/>
        <end position="240"/>
    </location>
    <ligand>
        <name>iminosuccinate</name>
        <dbReference type="ChEBI" id="CHEBI:77875"/>
    </ligand>
</feature>
<feature type="binding site" evidence="1">
    <location>
        <position position="255"/>
    </location>
    <ligand>
        <name>iminosuccinate</name>
        <dbReference type="ChEBI" id="CHEBI:77875"/>
    </ligand>
</feature>
<feature type="binding site" evidence="1">
    <location>
        <position position="309"/>
    </location>
    <ligand>
        <name>[4Fe-4S] cluster</name>
        <dbReference type="ChEBI" id="CHEBI:49883"/>
    </ligand>
</feature>
<organism>
    <name type="scientific">Burkholderia mallei (strain NCTC 10247)</name>
    <dbReference type="NCBI Taxonomy" id="320389"/>
    <lineage>
        <taxon>Bacteria</taxon>
        <taxon>Pseudomonadati</taxon>
        <taxon>Pseudomonadota</taxon>
        <taxon>Betaproteobacteria</taxon>
        <taxon>Burkholderiales</taxon>
        <taxon>Burkholderiaceae</taxon>
        <taxon>Burkholderia</taxon>
        <taxon>pseudomallei group</taxon>
    </lineage>
</organism>
<comment type="function">
    <text evidence="1">Catalyzes the condensation of iminoaspartate with dihydroxyacetone phosphate to form quinolinate.</text>
</comment>
<comment type="catalytic activity">
    <reaction evidence="1">
        <text>iminosuccinate + dihydroxyacetone phosphate = quinolinate + phosphate + 2 H2O + H(+)</text>
        <dbReference type="Rhea" id="RHEA:25888"/>
        <dbReference type="ChEBI" id="CHEBI:15377"/>
        <dbReference type="ChEBI" id="CHEBI:15378"/>
        <dbReference type="ChEBI" id="CHEBI:29959"/>
        <dbReference type="ChEBI" id="CHEBI:43474"/>
        <dbReference type="ChEBI" id="CHEBI:57642"/>
        <dbReference type="ChEBI" id="CHEBI:77875"/>
        <dbReference type="EC" id="2.5.1.72"/>
    </reaction>
    <physiologicalReaction direction="left-to-right" evidence="1">
        <dbReference type="Rhea" id="RHEA:25889"/>
    </physiologicalReaction>
</comment>
<comment type="cofactor">
    <cofactor evidence="1">
        <name>[4Fe-4S] cluster</name>
        <dbReference type="ChEBI" id="CHEBI:49883"/>
    </cofactor>
    <text evidence="1">Binds 1 [4Fe-4S] cluster per subunit.</text>
</comment>
<comment type="pathway">
    <text evidence="1">Cofactor biosynthesis; NAD(+) biosynthesis; quinolinate from iminoaspartate: step 1/1.</text>
</comment>
<comment type="subcellular location">
    <subcellularLocation>
        <location evidence="1">Cytoplasm</location>
    </subcellularLocation>
</comment>
<comment type="similarity">
    <text evidence="1">Belongs to the quinolinate synthase family. Type 1 subfamily.</text>
</comment>
<protein>
    <recommendedName>
        <fullName evidence="1">Quinolinate synthase</fullName>
        <ecNumber evidence="1">2.5.1.72</ecNumber>
    </recommendedName>
</protein>
<keyword id="KW-0004">4Fe-4S</keyword>
<keyword id="KW-0963">Cytoplasm</keyword>
<keyword id="KW-0408">Iron</keyword>
<keyword id="KW-0411">Iron-sulfur</keyword>
<keyword id="KW-0479">Metal-binding</keyword>
<keyword id="KW-0662">Pyridine nucleotide biosynthesis</keyword>
<keyword id="KW-0808">Transferase</keyword>
<gene>
    <name evidence="1" type="primary">nadA</name>
    <name type="ordered locus">BMA10247_2105</name>
</gene>
<evidence type="ECO:0000255" key="1">
    <source>
        <dbReference type="HAMAP-Rule" id="MF_00567"/>
    </source>
</evidence>
<sequence>MQSAIKSVEYDRPLAAGAACGVGEAWAKVPDALAPDERDALKARIKALLVREKAVLVAHYYVDADLQALADETGGCVADSLEMARFGRDHDAHTLVVAGVRFMGETAKILSPGKRVLMPDLDATCSLDLGCPVDEFSQFCDAHPERTVVVYANTSAAVKARADWMVTSSIGLEIVADLHARGEKIIWAPDRHLGGYIQKKTGADMLMWQGSCLVHDEFKGIELDLLRHEYPDAKILVHPESPEGVVALADVVGSTTQLIDAAVKLDAQRFIVATDLGILHKMRLAAPGKTFIEAPTAGNSATCKSCAHCPWMAMNALSNLADVLERGHNEIFVEAAIAQRARMPIDRMLDFAARHKQRVQASGDLQRDQALFANVGAA</sequence>
<reference key="1">
    <citation type="journal article" date="2010" name="Genome Biol. Evol.">
        <title>Continuing evolution of Burkholderia mallei through genome reduction and large-scale rearrangements.</title>
        <authorList>
            <person name="Losada L."/>
            <person name="Ronning C.M."/>
            <person name="DeShazer D."/>
            <person name="Woods D."/>
            <person name="Fedorova N."/>
            <person name="Kim H.S."/>
            <person name="Shabalina S.A."/>
            <person name="Pearson T.R."/>
            <person name="Brinkac L."/>
            <person name="Tan P."/>
            <person name="Nandi T."/>
            <person name="Crabtree J."/>
            <person name="Badger J."/>
            <person name="Beckstrom-Sternberg S."/>
            <person name="Saqib M."/>
            <person name="Schutzer S.E."/>
            <person name="Keim P."/>
            <person name="Nierman W.C."/>
        </authorList>
    </citation>
    <scope>NUCLEOTIDE SEQUENCE [LARGE SCALE GENOMIC DNA]</scope>
    <source>
        <strain>NCTC 10247</strain>
    </source>
</reference>
<accession>A3MN00</accession>
<proteinExistence type="inferred from homology"/>